<protein>
    <recommendedName>
        <fullName>Uncharacterized protein C17A5.19</fullName>
    </recommendedName>
</protein>
<reference key="1">
    <citation type="journal article" date="2002" name="Nature">
        <title>The genome sequence of Schizosaccharomyces pombe.</title>
        <authorList>
            <person name="Wood V."/>
            <person name="Gwilliam R."/>
            <person name="Rajandream M.A."/>
            <person name="Lyne M.H."/>
            <person name="Lyne R."/>
            <person name="Stewart A."/>
            <person name="Sgouros J.G."/>
            <person name="Peat N."/>
            <person name="Hayles J."/>
            <person name="Baker S.G."/>
            <person name="Basham D."/>
            <person name="Bowman S."/>
            <person name="Brooks K."/>
            <person name="Brown D."/>
            <person name="Brown S."/>
            <person name="Chillingworth T."/>
            <person name="Churcher C.M."/>
            <person name="Collins M."/>
            <person name="Connor R."/>
            <person name="Cronin A."/>
            <person name="Davis P."/>
            <person name="Feltwell T."/>
            <person name="Fraser A."/>
            <person name="Gentles S."/>
            <person name="Goble A."/>
            <person name="Hamlin N."/>
            <person name="Harris D.E."/>
            <person name="Hidalgo J."/>
            <person name="Hodgson G."/>
            <person name="Holroyd S."/>
            <person name="Hornsby T."/>
            <person name="Howarth S."/>
            <person name="Huckle E.J."/>
            <person name="Hunt S."/>
            <person name="Jagels K."/>
            <person name="James K.D."/>
            <person name="Jones L."/>
            <person name="Jones M."/>
            <person name="Leather S."/>
            <person name="McDonald S."/>
            <person name="McLean J."/>
            <person name="Mooney P."/>
            <person name="Moule S."/>
            <person name="Mungall K.L."/>
            <person name="Murphy L.D."/>
            <person name="Niblett D."/>
            <person name="Odell C."/>
            <person name="Oliver K."/>
            <person name="O'Neil S."/>
            <person name="Pearson D."/>
            <person name="Quail M.A."/>
            <person name="Rabbinowitsch E."/>
            <person name="Rutherford K.M."/>
            <person name="Rutter S."/>
            <person name="Saunders D."/>
            <person name="Seeger K."/>
            <person name="Sharp S."/>
            <person name="Skelton J."/>
            <person name="Simmonds M.N."/>
            <person name="Squares R."/>
            <person name="Squares S."/>
            <person name="Stevens K."/>
            <person name="Taylor K."/>
            <person name="Taylor R.G."/>
            <person name="Tivey A."/>
            <person name="Walsh S.V."/>
            <person name="Warren T."/>
            <person name="Whitehead S."/>
            <person name="Woodward J.R."/>
            <person name="Volckaert G."/>
            <person name="Aert R."/>
            <person name="Robben J."/>
            <person name="Grymonprez B."/>
            <person name="Weltjens I."/>
            <person name="Vanstreels E."/>
            <person name="Rieger M."/>
            <person name="Schaefer M."/>
            <person name="Mueller-Auer S."/>
            <person name="Gabel C."/>
            <person name="Fuchs M."/>
            <person name="Duesterhoeft A."/>
            <person name="Fritzc C."/>
            <person name="Holzer E."/>
            <person name="Moestl D."/>
            <person name="Hilbert H."/>
            <person name="Borzym K."/>
            <person name="Langer I."/>
            <person name="Beck A."/>
            <person name="Lehrach H."/>
            <person name="Reinhardt R."/>
            <person name="Pohl T.M."/>
            <person name="Eger P."/>
            <person name="Zimmermann W."/>
            <person name="Wedler H."/>
            <person name="Wambutt R."/>
            <person name="Purnelle B."/>
            <person name="Goffeau A."/>
            <person name="Cadieu E."/>
            <person name="Dreano S."/>
            <person name="Gloux S."/>
            <person name="Lelaure V."/>
            <person name="Mottier S."/>
            <person name="Galibert F."/>
            <person name="Aves S.J."/>
            <person name="Xiang Z."/>
            <person name="Hunt C."/>
            <person name="Moore K."/>
            <person name="Hurst S.M."/>
            <person name="Lucas M."/>
            <person name="Rochet M."/>
            <person name="Gaillardin C."/>
            <person name="Tallada V.A."/>
            <person name="Garzon A."/>
            <person name="Thode G."/>
            <person name="Daga R.R."/>
            <person name="Cruzado L."/>
            <person name="Jimenez J."/>
            <person name="Sanchez M."/>
            <person name="del Rey F."/>
            <person name="Benito J."/>
            <person name="Dominguez A."/>
            <person name="Revuelta J.L."/>
            <person name="Moreno S."/>
            <person name="Armstrong J."/>
            <person name="Forsburg S.L."/>
            <person name="Cerutti L."/>
            <person name="Lowe T."/>
            <person name="McCombie W.R."/>
            <person name="Paulsen I."/>
            <person name="Potashkin J."/>
            <person name="Shpakovski G.V."/>
            <person name="Ussery D."/>
            <person name="Barrell B.G."/>
            <person name="Nurse P."/>
        </authorList>
    </citation>
    <scope>NUCLEOTIDE SEQUENCE [LARGE SCALE GENOMIC DNA]</scope>
    <source>
        <strain>972 / ATCC 24843</strain>
    </source>
</reference>
<reference key="2">
    <citation type="journal article" date="2011" name="Science">
        <title>Comparative functional genomics of the fission yeasts.</title>
        <authorList>
            <person name="Rhind N."/>
            <person name="Chen Z."/>
            <person name="Yassour M."/>
            <person name="Thompson D.A."/>
            <person name="Haas B.J."/>
            <person name="Habib N."/>
            <person name="Wapinski I."/>
            <person name="Roy S."/>
            <person name="Lin M.F."/>
            <person name="Heiman D.I."/>
            <person name="Young S.K."/>
            <person name="Furuya K."/>
            <person name="Guo Y."/>
            <person name="Pidoux A."/>
            <person name="Chen H.M."/>
            <person name="Robbertse B."/>
            <person name="Goldberg J.M."/>
            <person name="Aoki K."/>
            <person name="Bayne E.H."/>
            <person name="Berlin A.M."/>
            <person name="Desjardins C.A."/>
            <person name="Dobbs E."/>
            <person name="Dukaj L."/>
            <person name="Fan L."/>
            <person name="FitzGerald M.G."/>
            <person name="French C."/>
            <person name="Gujja S."/>
            <person name="Hansen K."/>
            <person name="Keifenheim D."/>
            <person name="Levin J.Z."/>
            <person name="Mosher R.A."/>
            <person name="Mueller C.A."/>
            <person name="Pfiffner J."/>
            <person name="Priest M."/>
            <person name="Russ C."/>
            <person name="Smialowska A."/>
            <person name="Swoboda P."/>
            <person name="Sykes S.M."/>
            <person name="Vaughn M."/>
            <person name="Vengrova S."/>
            <person name="Yoder R."/>
            <person name="Zeng Q."/>
            <person name="Allshire R."/>
            <person name="Baulcombe D."/>
            <person name="Birren B.W."/>
            <person name="Brown W."/>
            <person name="Ekwall K."/>
            <person name="Kellis M."/>
            <person name="Leatherwood J."/>
            <person name="Levin H."/>
            <person name="Margalit H."/>
            <person name="Martienssen R."/>
            <person name="Nieduszynski C.A."/>
            <person name="Spatafora J.W."/>
            <person name="Friedman N."/>
            <person name="Dalgaard J.Z."/>
            <person name="Baumann P."/>
            <person name="Niki H."/>
            <person name="Regev A."/>
            <person name="Nusbaum C."/>
        </authorList>
    </citation>
    <scope>IDENTIFICATION</scope>
</reference>
<sequence>MSLRRIPNKNLIPEIPPFPEESINLLQNGVNTIPRINLEDVDVMSTKLPTDEELTENYQNWKKNLEVERLEKLKRIAPGYSASSPLLPSKSD</sequence>
<keyword id="KW-1185">Reference proteome</keyword>
<name>YE9J_SCHPO</name>
<organism>
    <name type="scientific">Schizosaccharomyces pombe (strain 972 / ATCC 24843)</name>
    <name type="common">Fission yeast</name>
    <dbReference type="NCBI Taxonomy" id="284812"/>
    <lineage>
        <taxon>Eukaryota</taxon>
        <taxon>Fungi</taxon>
        <taxon>Dikarya</taxon>
        <taxon>Ascomycota</taxon>
        <taxon>Taphrinomycotina</taxon>
        <taxon>Schizosaccharomycetes</taxon>
        <taxon>Schizosaccharomycetales</taxon>
        <taxon>Schizosaccharomycetaceae</taxon>
        <taxon>Schizosaccharomyces</taxon>
    </lineage>
</organism>
<feature type="chain" id="PRO_0000416628" description="Uncharacterized protein C17A5.19">
    <location>
        <begin position="1"/>
        <end position="92"/>
    </location>
</feature>
<proteinExistence type="predicted"/>
<accession>G2TRK1</accession>
<dbReference type="EMBL" id="CU329670">
    <property type="protein sequence ID" value="CCD31312.1"/>
    <property type="molecule type" value="Genomic_DNA"/>
</dbReference>
<dbReference type="RefSeq" id="XP_004001767.1">
    <property type="nucleotide sequence ID" value="XM_004001718.1"/>
</dbReference>
<dbReference type="SMR" id="G2TRK1"/>
<dbReference type="iPTMnet" id="G2TRK1"/>
<dbReference type="PaxDb" id="4896-SPAC17A5.19.1"/>
<dbReference type="EnsemblFungi" id="SPAC17A5.19.1">
    <property type="protein sequence ID" value="SPAC17A5.19.1:pep"/>
    <property type="gene ID" value="SPAC17A5.19"/>
</dbReference>
<dbReference type="PomBase" id="SPAC17A5.19"/>
<dbReference type="VEuPathDB" id="FungiDB:SPAC17A5.19"/>
<dbReference type="HOGENOM" id="CLU_2414539_0_0_1"/>
<dbReference type="InParanoid" id="G2TRK1"/>
<dbReference type="OMA" id="QWSSIEN"/>
<dbReference type="PRO" id="PR:G2TRK1"/>
<dbReference type="Proteomes" id="UP000002485">
    <property type="component" value="Chromosome I"/>
</dbReference>
<gene>
    <name type="ORF">SPAC17A5.19</name>
</gene>